<protein>
    <recommendedName>
        <fullName>Acidic phospholipase A2 beta-bungarotoxin A4 chain</fullName>
        <shortName>Beta-BuTX A4 chain</shortName>
        <shortName>svPLA2</shortName>
        <ecNumber>3.1.1.4</ecNumber>
    </recommendedName>
    <alternativeName>
        <fullName>Phosphatidylcholine 2-acylhydrolase</fullName>
    </alternativeName>
</protein>
<organism>
    <name type="scientific">Bungarus multicinctus</name>
    <name type="common">Many-banded krait</name>
    <dbReference type="NCBI Taxonomy" id="8616"/>
    <lineage>
        <taxon>Eukaryota</taxon>
        <taxon>Metazoa</taxon>
        <taxon>Chordata</taxon>
        <taxon>Craniata</taxon>
        <taxon>Vertebrata</taxon>
        <taxon>Euteleostomi</taxon>
        <taxon>Lepidosauria</taxon>
        <taxon>Squamata</taxon>
        <taxon>Bifurcata</taxon>
        <taxon>Unidentata</taxon>
        <taxon>Episquamata</taxon>
        <taxon>Toxicofera</taxon>
        <taxon>Serpentes</taxon>
        <taxon>Colubroidea</taxon>
        <taxon>Elapidae</taxon>
        <taxon>Bungarinae</taxon>
        <taxon>Bungarus</taxon>
    </lineage>
</organism>
<reference key="1">
    <citation type="journal article" date="1990" name="Nucleic Acids Res.">
        <title>cDNA deduced amino-acid sequence of a new phospholipase from Bungarus multicinctus.</title>
        <authorList>
            <person name="Danse J.-M."/>
            <person name="Garnier J.-M."/>
            <person name="Kempf J."/>
        </authorList>
    </citation>
    <scope>NUCLEOTIDE SEQUENCE [MRNA]</scope>
    <source>
        <tissue>Venom gland</tissue>
    </source>
</reference>
<reference key="2">
    <citation type="journal article" date="2001" name="Toxicon">
        <title>What does beta-bungarotoxin do at the neuromuscular junction?</title>
        <authorList>
            <person name="Rowan E.G."/>
        </authorList>
    </citation>
    <scope>REVIEW</scope>
</reference>
<evidence type="ECO:0000250" key="1">
    <source>
        <dbReference type="UniProtKB" id="P00617"/>
    </source>
</evidence>
<evidence type="ECO:0000250" key="2">
    <source>
        <dbReference type="UniProtKB" id="P14418"/>
    </source>
</evidence>
<evidence type="ECO:0000255" key="3"/>
<evidence type="ECO:0000255" key="4">
    <source>
        <dbReference type="PROSITE-ProRule" id="PRU10035"/>
    </source>
</evidence>
<evidence type="ECO:0000255" key="5">
    <source>
        <dbReference type="PROSITE-ProRule" id="PRU10036"/>
    </source>
</evidence>
<evidence type="ECO:0000305" key="6"/>
<evidence type="ECO:0000305" key="7">
    <source>
    </source>
</evidence>
<dbReference type="EC" id="3.1.1.4"/>
<dbReference type="EMBL" id="X53408">
    <property type="protein sequence ID" value="CAA37484.1"/>
    <property type="molecule type" value="mRNA"/>
</dbReference>
<dbReference type="PIR" id="S10982">
    <property type="entry name" value="PSKFA4"/>
</dbReference>
<dbReference type="SMR" id="P17934"/>
<dbReference type="GO" id="GO:0005576">
    <property type="term" value="C:extracellular region"/>
    <property type="evidence" value="ECO:0007669"/>
    <property type="project" value="UniProtKB-SubCell"/>
</dbReference>
<dbReference type="GO" id="GO:0005509">
    <property type="term" value="F:calcium ion binding"/>
    <property type="evidence" value="ECO:0007669"/>
    <property type="project" value="InterPro"/>
</dbReference>
<dbReference type="GO" id="GO:0047498">
    <property type="term" value="F:calcium-dependent phospholipase A2 activity"/>
    <property type="evidence" value="ECO:0007669"/>
    <property type="project" value="TreeGrafter"/>
</dbReference>
<dbReference type="GO" id="GO:0005543">
    <property type="term" value="F:phospholipid binding"/>
    <property type="evidence" value="ECO:0007669"/>
    <property type="project" value="TreeGrafter"/>
</dbReference>
<dbReference type="GO" id="GO:0090729">
    <property type="term" value="F:toxin activity"/>
    <property type="evidence" value="ECO:0007669"/>
    <property type="project" value="UniProtKB-KW"/>
</dbReference>
<dbReference type="GO" id="GO:0050482">
    <property type="term" value="P:arachidonate secretion"/>
    <property type="evidence" value="ECO:0007669"/>
    <property type="project" value="InterPro"/>
</dbReference>
<dbReference type="GO" id="GO:0016042">
    <property type="term" value="P:lipid catabolic process"/>
    <property type="evidence" value="ECO:0007669"/>
    <property type="project" value="UniProtKB-KW"/>
</dbReference>
<dbReference type="GO" id="GO:0006644">
    <property type="term" value="P:phospholipid metabolic process"/>
    <property type="evidence" value="ECO:0007669"/>
    <property type="project" value="InterPro"/>
</dbReference>
<dbReference type="CDD" id="cd00125">
    <property type="entry name" value="PLA2c"/>
    <property type="match status" value="1"/>
</dbReference>
<dbReference type="FunFam" id="1.20.90.10:FF:000007">
    <property type="entry name" value="Acidic phospholipase A2"/>
    <property type="match status" value="1"/>
</dbReference>
<dbReference type="Gene3D" id="1.20.90.10">
    <property type="entry name" value="Phospholipase A2 domain"/>
    <property type="match status" value="1"/>
</dbReference>
<dbReference type="InterPro" id="IPR001211">
    <property type="entry name" value="PLipase_A2"/>
</dbReference>
<dbReference type="InterPro" id="IPR033112">
    <property type="entry name" value="PLipase_A2_Asp_AS"/>
</dbReference>
<dbReference type="InterPro" id="IPR016090">
    <property type="entry name" value="PLipase_A2_dom"/>
</dbReference>
<dbReference type="InterPro" id="IPR036444">
    <property type="entry name" value="PLipase_A2_dom_sf"/>
</dbReference>
<dbReference type="InterPro" id="IPR033113">
    <property type="entry name" value="PLipase_A2_His_AS"/>
</dbReference>
<dbReference type="PANTHER" id="PTHR11716:SF106">
    <property type="entry name" value="PHOSPHOLIPASE A2 A2-ACTITOXIN-UCS2A-LIKE"/>
    <property type="match status" value="1"/>
</dbReference>
<dbReference type="PANTHER" id="PTHR11716">
    <property type="entry name" value="PHOSPHOLIPASE A2 FAMILY MEMBER"/>
    <property type="match status" value="1"/>
</dbReference>
<dbReference type="Pfam" id="PF00068">
    <property type="entry name" value="Phospholip_A2_1"/>
    <property type="match status" value="1"/>
</dbReference>
<dbReference type="PRINTS" id="PR00389">
    <property type="entry name" value="PHPHLIPASEA2"/>
</dbReference>
<dbReference type="SMART" id="SM00085">
    <property type="entry name" value="PA2c"/>
    <property type="match status" value="1"/>
</dbReference>
<dbReference type="SUPFAM" id="SSF48619">
    <property type="entry name" value="Phospholipase A2, PLA2"/>
    <property type="match status" value="1"/>
</dbReference>
<dbReference type="PROSITE" id="PS00119">
    <property type="entry name" value="PA2_ASP"/>
    <property type="match status" value="1"/>
</dbReference>
<dbReference type="PROSITE" id="PS00118">
    <property type="entry name" value="PA2_HIS"/>
    <property type="match status" value="1"/>
</dbReference>
<feature type="signal peptide" evidence="3">
    <location>
        <begin position="1"/>
        <end position="19"/>
    </location>
</feature>
<feature type="propeptide" id="PRO_0000022841" evidence="7">
    <location>
        <begin position="20"/>
        <end position="27"/>
    </location>
</feature>
<feature type="chain" id="PRO_0000022842" description="Acidic phospholipase A2 beta-bungarotoxin A4 chain" evidence="7">
    <location>
        <begin position="28"/>
        <end position="147"/>
    </location>
</feature>
<feature type="active site" evidence="2">
    <location>
        <position position="75"/>
    </location>
</feature>
<feature type="active site" evidence="2">
    <location>
        <position position="121"/>
    </location>
</feature>
<feature type="binding site" evidence="1">
    <location>
        <position position="55"/>
    </location>
    <ligand>
        <name>Ca(2+)</name>
        <dbReference type="ChEBI" id="CHEBI:29108"/>
    </ligand>
</feature>
<feature type="binding site" evidence="1">
    <location>
        <position position="57"/>
    </location>
    <ligand>
        <name>Ca(2+)</name>
        <dbReference type="ChEBI" id="CHEBI:29108"/>
    </ligand>
</feature>
<feature type="binding site" evidence="1">
    <location>
        <position position="59"/>
    </location>
    <ligand>
        <name>Ca(2+)</name>
        <dbReference type="ChEBI" id="CHEBI:29108"/>
    </ligand>
</feature>
<feature type="binding site" evidence="1">
    <location>
        <position position="76"/>
    </location>
    <ligand>
        <name>Ca(2+)</name>
        <dbReference type="ChEBI" id="CHEBI:29108"/>
    </ligand>
</feature>
<feature type="disulfide bond" description="Interchain (with a B chain)" evidence="1">
    <location>
        <position position="42"/>
    </location>
</feature>
<feature type="disulfide bond" evidence="1">
    <location>
        <begin position="54"/>
        <end position="146"/>
    </location>
</feature>
<feature type="disulfide bond" evidence="1">
    <location>
        <begin position="56"/>
        <end position="72"/>
    </location>
</feature>
<feature type="disulfide bond" evidence="1">
    <location>
        <begin position="71"/>
        <end position="127"/>
    </location>
</feature>
<feature type="disulfide bond" evidence="1">
    <location>
        <begin position="78"/>
        <end position="120"/>
    </location>
</feature>
<feature type="disulfide bond" evidence="1">
    <location>
        <begin position="88"/>
        <end position="113"/>
    </location>
</feature>
<feature type="disulfide bond" evidence="1">
    <location>
        <begin position="106"/>
        <end position="118"/>
    </location>
</feature>
<accession>P17934</accession>
<comment type="function">
    <text>Snake venom phospholipase A2 (PLA2) that inhibits neuromuscular transmission by blocking acetylcholine release from the nerve termini. PLA2 catalyzes the calcium-dependent hydrolysis of the 2-acyl groups in 3-sn-phosphoglycerides.</text>
</comment>
<comment type="catalytic activity">
    <reaction evidence="4 5">
        <text>a 1,2-diacyl-sn-glycero-3-phosphocholine + H2O = a 1-acyl-sn-glycero-3-phosphocholine + a fatty acid + H(+)</text>
        <dbReference type="Rhea" id="RHEA:15801"/>
        <dbReference type="ChEBI" id="CHEBI:15377"/>
        <dbReference type="ChEBI" id="CHEBI:15378"/>
        <dbReference type="ChEBI" id="CHEBI:28868"/>
        <dbReference type="ChEBI" id="CHEBI:57643"/>
        <dbReference type="ChEBI" id="CHEBI:58168"/>
        <dbReference type="EC" id="3.1.1.4"/>
    </reaction>
</comment>
<comment type="cofactor">
    <cofactor evidence="1">
        <name>Ca(2+)</name>
        <dbReference type="ChEBI" id="CHEBI:29108"/>
    </cofactor>
    <text evidence="1">Binds 1 Ca(2+) ion.</text>
</comment>
<comment type="subunit">
    <text evidence="1">Heterodimer; disulfide-linked. The A chains have phospholipase A2 activity and the B chains show homology with the basic protease inhibitors.</text>
</comment>
<comment type="subcellular location">
    <subcellularLocation>
        <location evidence="7">Secreted</location>
    </subcellularLocation>
</comment>
<comment type="tissue specificity">
    <text evidence="7">Expressed by the venom gland.</text>
</comment>
<comment type="similarity">
    <text evidence="6">Belongs to the phospholipase A2 family. Group I subfamily. D49 sub-subfamily.</text>
</comment>
<proteinExistence type="evidence at transcript level"/>
<sequence>MNPAHLLVLSAVCVSLLGAANIPPQHLDLYQFKEMIRYTIPCEKTWGEYADYGCYCGAGGSGTPIDALDRCCYVHDNCYGDAANIRDCDPKTQSYSYKLTKRTIICYGAAGTCARVVCDCDRTAALCFGNSEYIEGHKNIDTARFCQ</sequence>
<name>PA2A4_BUNMU</name>
<keyword id="KW-0106">Calcium</keyword>
<keyword id="KW-1015">Disulfide bond</keyword>
<keyword id="KW-0378">Hydrolase</keyword>
<keyword id="KW-0442">Lipid degradation</keyword>
<keyword id="KW-0443">Lipid metabolism</keyword>
<keyword id="KW-0479">Metal-binding</keyword>
<keyword id="KW-0528">Neurotoxin</keyword>
<keyword id="KW-0638">Presynaptic neurotoxin</keyword>
<keyword id="KW-0964">Secreted</keyword>
<keyword id="KW-0732">Signal</keyword>
<keyword id="KW-0800">Toxin</keyword>